<organism>
    <name type="scientific">Pseudomonas fluorescens (strain SBW25)</name>
    <dbReference type="NCBI Taxonomy" id="216595"/>
    <lineage>
        <taxon>Bacteria</taxon>
        <taxon>Pseudomonadati</taxon>
        <taxon>Pseudomonadota</taxon>
        <taxon>Gammaproteobacteria</taxon>
        <taxon>Pseudomonadales</taxon>
        <taxon>Pseudomonadaceae</taxon>
        <taxon>Pseudomonas</taxon>
    </lineage>
</organism>
<accession>C3K3G6</accession>
<keyword id="KW-0963">Cytoplasm</keyword>
<keyword id="KW-0378">Hydrolase</keyword>
<keyword id="KW-0520">NAD</keyword>
<keyword id="KW-0554">One-carbon metabolism</keyword>
<gene>
    <name evidence="1" type="primary">ahcY</name>
    <name type="ordered locus">PFLU_5720</name>
</gene>
<feature type="chain" id="PRO_1000212057" description="Adenosylhomocysteinase">
    <location>
        <begin position="1"/>
        <end position="469"/>
    </location>
</feature>
<feature type="binding site" evidence="1">
    <location>
        <position position="63"/>
    </location>
    <ligand>
        <name>substrate</name>
    </ligand>
</feature>
<feature type="binding site" evidence="1">
    <location>
        <position position="139"/>
    </location>
    <ligand>
        <name>substrate</name>
    </ligand>
</feature>
<feature type="binding site" evidence="1">
    <location>
        <position position="164"/>
    </location>
    <ligand>
        <name>substrate</name>
    </ligand>
</feature>
<feature type="binding site" evidence="1">
    <location>
        <begin position="165"/>
        <end position="167"/>
    </location>
    <ligand>
        <name>NAD(+)</name>
        <dbReference type="ChEBI" id="CHEBI:57540"/>
    </ligand>
</feature>
<feature type="binding site" evidence="1">
    <location>
        <position position="194"/>
    </location>
    <ligand>
        <name>substrate</name>
    </ligand>
</feature>
<feature type="binding site" evidence="1">
    <location>
        <position position="198"/>
    </location>
    <ligand>
        <name>substrate</name>
    </ligand>
</feature>
<feature type="binding site" evidence="1">
    <location>
        <position position="199"/>
    </location>
    <ligand>
        <name>NAD(+)</name>
        <dbReference type="ChEBI" id="CHEBI:57540"/>
    </ligand>
</feature>
<feature type="binding site" evidence="1">
    <location>
        <begin position="228"/>
        <end position="233"/>
    </location>
    <ligand>
        <name>NAD(+)</name>
        <dbReference type="ChEBI" id="CHEBI:57540"/>
    </ligand>
</feature>
<feature type="binding site" evidence="1">
    <location>
        <position position="251"/>
    </location>
    <ligand>
        <name>NAD(+)</name>
        <dbReference type="ChEBI" id="CHEBI:57540"/>
    </ligand>
</feature>
<feature type="binding site" evidence="1">
    <location>
        <position position="300"/>
    </location>
    <ligand>
        <name>NAD(+)</name>
        <dbReference type="ChEBI" id="CHEBI:57540"/>
    </ligand>
</feature>
<feature type="binding site" evidence="1">
    <location>
        <begin position="321"/>
        <end position="323"/>
    </location>
    <ligand>
        <name>NAD(+)</name>
        <dbReference type="ChEBI" id="CHEBI:57540"/>
    </ligand>
</feature>
<feature type="binding site" evidence="1">
    <location>
        <position position="375"/>
    </location>
    <ligand>
        <name>NAD(+)</name>
        <dbReference type="ChEBI" id="CHEBI:57540"/>
    </ligand>
</feature>
<reference key="1">
    <citation type="journal article" date="2009" name="Genome Biol.">
        <title>Genomic and genetic analyses of diversity and plant interactions of Pseudomonas fluorescens.</title>
        <authorList>
            <person name="Silby M.W."/>
            <person name="Cerdeno-Tarraga A.M."/>
            <person name="Vernikos G.S."/>
            <person name="Giddens S.R."/>
            <person name="Jackson R.W."/>
            <person name="Preston G.M."/>
            <person name="Zhang X.-X."/>
            <person name="Moon C.D."/>
            <person name="Gehrig S.M."/>
            <person name="Godfrey S.A.C."/>
            <person name="Knight C.G."/>
            <person name="Malone J.G."/>
            <person name="Robinson Z."/>
            <person name="Spiers A.J."/>
            <person name="Harris S."/>
            <person name="Challis G.L."/>
            <person name="Yaxley A.M."/>
            <person name="Harris D."/>
            <person name="Seeger K."/>
            <person name="Murphy L."/>
            <person name="Rutter S."/>
            <person name="Squares R."/>
            <person name="Quail M.A."/>
            <person name="Saunders E."/>
            <person name="Mavromatis K."/>
            <person name="Brettin T.S."/>
            <person name="Bentley S.D."/>
            <person name="Hothersall J."/>
            <person name="Stephens E."/>
            <person name="Thomas C.M."/>
            <person name="Parkhill J."/>
            <person name="Levy S.B."/>
            <person name="Rainey P.B."/>
            <person name="Thomson N.R."/>
        </authorList>
    </citation>
    <scope>NUCLEOTIDE SEQUENCE [LARGE SCALE GENOMIC DNA]</scope>
    <source>
        <strain>SBW25</strain>
    </source>
</reference>
<comment type="function">
    <text evidence="1">May play a key role in the regulation of the intracellular concentration of adenosylhomocysteine.</text>
</comment>
<comment type="catalytic activity">
    <reaction evidence="1">
        <text>S-adenosyl-L-homocysteine + H2O = L-homocysteine + adenosine</text>
        <dbReference type="Rhea" id="RHEA:21708"/>
        <dbReference type="ChEBI" id="CHEBI:15377"/>
        <dbReference type="ChEBI" id="CHEBI:16335"/>
        <dbReference type="ChEBI" id="CHEBI:57856"/>
        <dbReference type="ChEBI" id="CHEBI:58199"/>
        <dbReference type="EC" id="3.13.2.1"/>
    </reaction>
</comment>
<comment type="cofactor">
    <cofactor evidence="1">
        <name>NAD(+)</name>
        <dbReference type="ChEBI" id="CHEBI:57540"/>
    </cofactor>
    <text evidence="1">Binds 1 NAD(+) per subunit.</text>
</comment>
<comment type="pathway">
    <text evidence="1">Amino-acid biosynthesis; L-homocysteine biosynthesis; L-homocysteine from S-adenosyl-L-homocysteine: step 1/1.</text>
</comment>
<comment type="subcellular location">
    <subcellularLocation>
        <location evidence="1">Cytoplasm</location>
    </subcellularLocation>
</comment>
<comment type="similarity">
    <text evidence="1">Belongs to the adenosylhomocysteinase family.</text>
</comment>
<proteinExistence type="inferred from homology"/>
<protein>
    <recommendedName>
        <fullName evidence="1">Adenosylhomocysteinase</fullName>
        <ecNumber evidence="1">3.13.2.1</ecNumber>
    </recommendedName>
    <alternativeName>
        <fullName evidence="1">S-adenosyl-L-homocysteine hydrolase</fullName>
        <shortName evidence="1">AdoHcyase</shortName>
    </alternativeName>
</protein>
<sequence length="469" mass="51245">MSAVNTPADFNDYKVADMSLAAWGRRETFIAESEMPALMGLRRKYAAEQPLKGAKILGCIHMTIQTAVLIETLVALGAEVRWSSCNIFSTQDQAAAAIAAAGIPVFAWKGETEEEYEWCLEQTILKDGAPWDANMILDDGGDLTELLHKKYPAILDRVHGVTEETTTGVHRLLDMLAKGELKIPAINVNDSVTKSKNDNKYGCRHSLNDAIKRGTDHLLSGKQALVIGYGDVGKGSSQSLRQEGMIVKVSEVDPICAMQACMDGFEVVSPFIDGVNDGTEASIDKALLGKIDLIVTTTGNVNVCDANMLKALKKRAVVCNIGHFDNEIDTAFMRKNWAWEEVKPQVHKVHRTGAGAFDAQNDDYLILLAEGRLVNLGNATGHPSRIMDGSFANQVLAQIFLFGQKYADLSPAQKAERLTVEVLPKKLDEEVALEMVRGFGGVVTQLTKTQADYIGVTVEGPFKPHAYRY</sequence>
<dbReference type="EC" id="3.13.2.1" evidence="1"/>
<dbReference type="EMBL" id="AM181176">
    <property type="protein sequence ID" value="CAY53075.1"/>
    <property type="molecule type" value="Genomic_DNA"/>
</dbReference>
<dbReference type="RefSeq" id="WP_015886307.1">
    <property type="nucleotide sequence ID" value="NC_012660.1"/>
</dbReference>
<dbReference type="SMR" id="C3K3G6"/>
<dbReference type="STRING" id="294.SRM1_05374"/>
<dbReference type="GeneID" id="93467351"/>
<dbReference type="eggNOG" id="COG0499">
    <property type="taxonomic scope" value="Bacteria"/>
</dbReference>
<dbReference type="HOGENOM" id="CLU_025194_2_1_6"/>
<dbReference type="OrthoDB" id="9802717at2"/>
<dbReference type="UniPathway" id="UPA00314">
    <property type="reaction ID" value="UER00076"/>
</dbReference>
<dbReference type="GO" id="GO:0005829">
    <property type="term" value="C:cytosol"/>
    <property type="evidence" value="ECO:0007669"/>
    <property type="project" value="TreeGrafter"/>
</dbReference>
<dbReference type="GO" id="GO:0004013">
    <property type="term" value="F:adenosylhomocysteinase activity"/>
    <property type="evidence" value="ECO:0007669"/>
    <property type="project" value="UniProtKB-UniRule"/>
</dbReference>
<dbReference type="GO" id="GO:0071269">
    <property type="term" value="P:L-homocysteine biosynthetic process"/>
    <property type="evidence" value="ECO:0007669"/>
    <property type="project" value="UniProtKB-UniRule"/>
</dbReference>
<dbReference type="GO" id="GO:0006730">
    <property type="term" value="P:one-carbon metabolic process"/>
    <property type="evidence" value="ECO:0007669"/>
    <property type="project" value="UniProtKB-KW"/>
</dbReference>
<dbReference type="GO" id="GO:0033353">
    <property type="term" value="P:S-adenosylmethionine cycle"/>
    <property type="evidence" value="ECO:0007669"/>
    <property type="project" value="TreeGrafter"/>
</dbReference>
<dbReference type="CDD" id="cd00401">
    <property type="entry name" value="SAHH"/>
    <property type="match status" value="1"/>
</dbReference>
<dbReference type="FunFam" id="3.40.50.1480:FF:000006">
    <property type="entry name" value="Adenosylhomocysteinase"/>
    <property type="match status" value="1"/>
</dbReference>
<dbReference type="FunFam" id="3.40.50.1480:FF:000007">
    <property type="entry name" value="Adenosylhomocysteinase"/>
    <property type="match status" value="1"/>
</dbReference>
<dbReference type="FunFam" id="3.40.50.720:FF:000155">
    <property type="entry name" value="Adenosylhomocysteinase"/>
    <property type="match status" value="1"/>
</dbReference>
<dbReference type="Gene3D" id="3.40.50.1480">
    <property type="entry name" value="Adenosylhomocysteinase-like"/>
    <property type="match status" value="3"/>
</dbReference>
<dbReference type="Gene3D" id="3.40.50.720">
    <property type="entry name" value="NAD(P)-binding Rossmann-like Domain"/>
    <property type="match status" value="1"/>
</dbReference>
<dbReference type="HAMAP" id="MF_00563">
    <property type="entry name" value="AdoHcyase"/>
    <property type="match status" value="1"/>
</dbReference>
<dbReference type="InterPro" id="IPR042172">
    <property type="entry name" value="Adenosylhomocyst_ase-like_sf"/>
</dbReference>
<dbReference type="InterPro" id="IPR000043">
    <property type="entry name" value="Adenosylhomocysteinase-like"/>
</dbReference>
<dbReference type="InterPro" id="IPR015878">
    <property type="entry name" value="Ado_hCys_hydrolase_NAD-bd"/>
</dbReference>
<dbReference type="InterPro" id="IPR036291">
    <property type="entry name" value="NAD(P)-bd_dom_sf"/>
</dbReference>
<dbReference type="InterPro" id="IPR020082">
    <property type="entry name" value="S-Ado-L-homoCys_hydrolase_CS"/>
</dbReference>
<dbReference type="NCBIfam" id="TIGR00936">
    <property type="entry name" value="ahcY"/>
    <property type="match status" value="1"/>
</dbReference>
<dbReference type="NCBIfam" id="NF004005">
    <property type="entry name" value="PRK05476.2-3"/>
    <property type="match status" value="1"/>
</dbReference>
<dbReference type="PANTHER" id="PTHR23420">
    <property type="entry name" value="ADENOSYLHOMOCYSTEINASE"/>
    <property type="match status" value="1"/>
</dbReference>
<dbReference type="PANTHER" id="PTHR23420:SF0">
    <property type="entry name" value="ADENOSYLHOMOCYSTEINASE"/>
    <property type="match status" value="1"/>
</dbReference>
<dbReference type="Pfam" id="PF05221">
    <property type="entry name" value="AdoHcyase"/>
    <property type="match status" value="1"/>
</dbReference>
<dbReference type="Pfam" id="PF00670">
    <property type="entry name" value="AdoHcyase_NAD"/>
    <property type="match status" value="1"/>
</dbReference>
<dbReference type="PIRSF" id="PIRSF001109">
    <property type="entry name" value="Ad_hcy_hydrolase"/>
    <property type="match status" value="1"/>
</dbReference>
<dbReference type="SMART" id="SM00996">
    <property type="entry name" value="AdoHcyase"/>
    <property type="match status" value="1"/>
</dbReference>
<dbReference type="SMART" id="SM00997">
    <property type="entry name" value="AdoHcyase_NAD"/>
    <property type="match status" value="1"/>
</dbReference>
<dbReference type="SUPFAM" id="SSF52283">
    <property type="entry name" value="Formate/glycerate dehydrogenase catalytic domain-like"/>
    <property type="match status" value="1"/>
</dbReference>
<dbReference type="SUPFAM" id="SSF51735">
    <property type="entry name" value="NAD(P)-binding Rossmann-fold domains"/>
    <property type="match status" value="1"/>
</dbReference>
<dbReference type="PROSITE" id="PS00738">
    <property type="entry name" value="ADOHCYASE_1"/>
    <property type="match status" value="1"/>
</dbReference>
<dbReference type="PROSITE" id="PS00739">
    <property type="entry name" value="ADOHCYASE_2"/>
    <property type="match status" value="1"/>
</dbReference>
<name>SAHH_PSEFS</name>
<evidence type="ECO:0000255" key="1">
    <source>
        <dbReference type="HAMAP-Rule" id="MF_00563"/>
    </source>
</evidence>